<gene>
    <name evidence="1" type="primary">metG</name>
    <name type="ordered locus">UTI89_C2388</name>
</gene>
<feature type="chain" id="PRO_0000331818" description="Methionine--tRNA ligase">
    <location>
        <begin position="1"/>
        <end position="677"/>
    </location>
</feature>
<feature type="domain" description="tRNA-binding" evidence="1">
    <location>
        <begin position="575"/>
        <end position="677"/>
    </location>
</feature>
<feature type="short sequence motif" description="'HIGH' region">
    <location>
        <begin position="15"/>
        <end position="25"/>
    </location>
</feature>
<feature type="short sequence motif" description="'KMSKS' region">
    <location>
        <begin position="333"/>
        <end position="337"/>
    </location>
</feature>
<feature type="binding site" evidence="1">
    <location>
        <position position="146"/>
    </location>
    <ligand>
        <name>Zn(2+)</name>
        <dbReference type="ChEBI" id="CHEBI:29105"/>
    </ligand>
</feature>
<feature type="binding site" evidence="1">
    <location>
        <position position="149"/>
    </location>
    <ligand>
        <name>Zn(2+)</name>
        <dbReference type="ChEBI" id="CHEBI:29105"/>
    </ligand>
</feature>
<feature type="binding site" evidence="1">
    <location>
        <position position="159"/>
    </location>
    <ligand>
        <name>Zn(2+)</name>
        <dbReference type="ChEBI" id="CHEBI:29105"/>
    </ligand>
</feature>
<feature type="binding site" evidence="1">
    <location>
        <position position="162"/>
    </location>
    <ligand>
        <name>Zn(2+)</name>
        <dbReference type="ChEBI" id="CHEBI:29105"/>
    </ligand>
</feature>
<feature type="binding site" evidence="1">
    <location>
        <position position="336"/>
    </location>
    <ligand>
        <name>ATP</name>
        <dbReference type="ChEBI" id="CHEBI:30616"/>
    </ligand>
</feature>
<sequence>MTQVAKKILVTCALPYANGSIHLGHMLEHIQADVWVRYQRMRGHEVNFICADDAHGTPIMLKAQQLGITPEQMIGEMSQEHQTDFAGFNISYDNYHSTHSEENRQLSELIYSRLKENGFIKNRTISQLYDPEKGMFLPDRFVKGTCPKCKSPDQYGDNCEVCGATYSPTELIEPKSVVSGATPVMRDSEHFFFDLPSFSEMLQAWTRSGALQEQVANKMQEWFESGLQQWDISRDAPYFGFEIPNAPGKYFYVWLDAPIGYMGSFKNLCDKRGDSVSFDKYWKKDSTAELYHFIGKDIVYFHSLFWPAMLEGSNFRKPTNLFVHGYVTVNGAKMSKSRGTFIKASTWLNHFDADSLRYYYTAKLSSRIDDIDLNLEDFVQRVNADIVNKVVNLASRNAGFINKRFDGVLASELADPQLYKTFTDAAEVIGEAWESREFGKAIREIMALADLANRYVDEQAPWVVAKQEGRDADLQAICSMGINLFRVLMTYLKPVLPKLTERAEAFLNTELTWDGIQQPLLGHKVNPFKALYNRIDMKQVEALVEASKEEVKATAAPVTGPLADDPIQETITFDDFAKVDLRVALIENAEFVEGSDKLLRLTLDLGGEKRNVFSGIRSAYPDPQALIGRHTIMVANLAPRKMRFGISEGMVMAAGPGGKDIFLLSPDAGAKPGHQVK</sequence>
<reference key="1">
    <citation type="journal article" date="2006" name="Proc. Natl. Acad. Sci. U.S.A.">
        <title>Identification of genes subject to positive selection in uropathogenic strains of Escherichia coli: a comparative genomics approach.</title>
        <authorList>
            <person name="Chen S.L."/>
            <person name="Hung C.-S."/>
            <person name="Xu J."/>
            <person name="Reigstad C.S."/>
            <person name="Magrini V."/>
            <person name="Sabo A."/>
            <person name="Blasiar D."/>
            <person name="Bieri T."/>
            <person name="Meyer R.R."/>
            <person name="Ozersky P."/>
            <person name="Armstrong J.R."/>
            <person name="Fulton R.S."/>
            <person name="Latreille J.P."/>
            <person name="Spieth J."/>
            <person name="Hooton T.M."/>
            <person name="Mardis E.R."/>
            <person name="Hultgren S.J."/>
            <person name="Gordon J.I."/>
        </authorList>
    </citation>
    <scope>NUCLEOTIDE SEQUENCE [LARGE SCALE GENOMIC DNA]</scope>
    <source>
        <strain>UTI89 / UPEC</strain>
    </source>
</reference>
<accession>Q1R9V8</accession>
<name>SYM_ECOUT</name>
<proteinExistence type="inferred from homology"/>
<evidence type="ECO:0000255" key="1">
    <source>
        <dbReference type="HAMAP-Rule" id="MF_00098"/>
    </source>
</evidence>
<evidence type="ECO:0000305" key="2"/>
<dbReference type="EC" id="6.1.1.10" evidence="1"/>
<dbReference type="EMBL" id="CP000243">
    <property type="protein sequence ID" value="ABE07856.1"/>
    <property type="status" value="ALT_INIT"/>
    <property type="molecule type" value="Genomic_DNA"/>
</dbReference>
<dbReference type="RefSeq" id="WP_001350700.1">
    <property type="nucleotide sequence ID" value="NZ_CP064825.1"/>
</dbReference>
<dbReference type="SMR" id="Q1R9V8"/>
<dbReference type="KEGG" id="eci:UTI89_C2388"/>
<dbReference type="HOGENOM" id="CLU_009710_7_0_6"/>
<dbReference type="Proteomes" id="UP000001952">
    <property type="component" value="Chromosome"/>
</dbReference>
<dbReference type="GO" id="GO:0005829">
    <property type="term" value="C:cytosol"/>
    <property type="evidence" value="ECO:0007669"/>
    <property type="project" value="TreeGrafter"/>
</dbReference>
<dbReference type="GO" id="GO:0005524">
    <property type="term" value="F:ATP binding"/>
    <property type="evidence" value="ECO:0007669"/>
    <property type="project" value="UniProtKB-UniRule"/>
</dbReference>
<dbReference type="GO" id="GO:0046872">
    <property type="term" value="F:metal ion binding"/>
    <property type="evidence" value="ECO:0007669"/>
    <property type="project" value="UniProtKB-KW"/>
</dbReference>
<dbReference type="GO" id="GO:0004825">
    <property type="term" value="F:methionine-tRNA ligase activity"/>
    <property type="evidence" value="ECO:0007669"/>
    <property type="project" value="UniProtKB-UniRule"/>
</dbReference>
<dbReference type="GO" id="GO:0000049">
    <property type="term" value="F:tRNA binding"/>
    <property type="evidence" value="ECO:0007669"/>
    <property type="project" value="UniProtKB-KW"/>
</dbReference>
<dbReference type="GO" id="GO:0006431">
    <property type="term" value="P:methionyl-tRNA aminoacylation"/>
    <property type="evidence" value="ECO:0007669"/>
    <property type="project" value="UniProtKB-UniRule"/>
</dbReference>
<dbReference type="CDD" id="cd07957">
    <property type="entry name" value="Anticodon_Ia_Met"/>
    <property type="match status" value="1"/>
</dbReference>
<dbReference type="CDD" id="cd00814">
    <property type="entry name" value="MetRS_core"/>
    <property type="match status" value="1"/>
</dbReference>
<dbReference type="CDD" id="cd02800">
    <property type="entry name" value="tRNA_bind_EcMetRS_like"/>
    <property type="match status" value="1"/>
</dbReference>
<dbReference type="FunFam" id="1.10.730.10:FF:000005">
    <property type="entry name" value="Methionine--tRNA ligase"/>
    <property type="match status" value="1"/>
</dbReference>
<dbReference type="FunFam" id="2.20.28.20:FF:000001">
    <property type="entry name" value="Methionine--tRNA ligase"/>
    <property type="match status" value="1"/>
</dbReference>
<dbReference type="FunFam" id="2.40.50.140:FF:000042">
    <property type="entry name" value="Methionine--tRNA ligase"/>
    <property type="match status" value="1"/>
</dbReference>
<dbReference type="Gene3D" id="3.40.50.620">
    <property type="entry name" value="HUPs"/>
    <property type="match status" value="1"/>
</dbReference>
<dbReference type="Gene3D" id="1.10.730.10">
    <property type="entry name" value="Isoleucyl-tRNA Synthetase, Domain 1"/>
    <property type="match status" value="1"/>
</dbReference>
<dbReference type="Gene3D" id="2.20.28.20">
    <property type="entry name" value="Methionyl-tRNA synthetase, Zn-domain"/>
    <property type="match status" value="1"/>
</dbReference>
<dbReference type="Gene3D" id="2.40.50.140">
    <property type="entry name" value="Nucleic acid-binding proteins"/>
    <property type="match status" value="1"/>
</dbReference>
<dbReference type="HAMAP" id="MF_00098">
    <property type="entry name" value="Met_tRNA_synth_type1"/>
    <property type="match status" value="1"/>
</dbReference>
<dbReference type="InterPro" id="IPR001412">
    <property type="entry name" value="aa-tRNA-synth_I_CS"/>
</dbReference>
<dbReference type="InterPro" id="IPR041872">
    <property type="entry name" value="Anticodon_Met"/>
</dbReference>
<dbReference type="InterPro" id="IPR004495">
    <property type="entry name" value="Met-tRNA-synth_bsu_C"/>
</dbReference>
<dbReference type="InterPro" id="IPR023458">
    <property type="entry name" value="Met-tRNA_ligase_1"/>
</dbReference>
<dbReference type="InterPro" id="IPR014758">
    <property type="entry name" value="Met-tRNA_synth"/>
</dbReference>
<dbReference type="InterPro" id="IPR015413">
    <property type="entry name" value="Methionyl/Leucyl_tRNA_Synth"/>
</dbReference>
<dbReference type="InterPro" id="IPR033911">
    <property type="entry name" value="MetRS_core"/>
</dbReference>
<dbReference type="InterPro" id="IPR029038">
    <property type="entry name" value="MetRS_Zn"/>
</dbReference>
<dbReference type="InterPro" id="IPR012340">
    <property type="entry name" value="NA-bd_OB-fold"/>
</dbReference>
<dbReference type="InterPro" id="IPR014729">
    <property type="entry name" value="Rossmann-like_a/b/a_fold"/>
</dbReference>
<dbReference type="InterPro" id="IPR002547">
    <property type="entry name" value="tRNA-bd_dom"/>
</dbReference>
<dbReference type="InterPro" id="IPR009080">
    <property type="entry name" value="tRNAsynth_Ia_anticodon-bd"/>
</dbReference>
<dbReference type="NCBIfam" id="TIGR00398">
    <property type="entry name" value="metG"/>
    <property type="match status" value="1"/>
</dbReference>
<dbReference type="NCBIfam" id="TIGR00399">
    <property type="entry name" value="metG_C_term"/>
    <property type="match status" value="1"/>
</dbReference>
<dbReference type="NCBIfam" id="NF001100">
    <property type="entry name" value="PRK00133.1"/>
    <property type="match status" value="1"/>
</dbReference>
<dbReference type="PANTHER" id="PTHR45765">
    <property type="entry name" value="METHIONINE--TRNA LIGASE"/>
    <property type="match status" value="1"/>
</dbReference>
<dbReference type="PANTHER" id="PTHR45765:SF1">
    <property type="entry name" value="METHIONINE--TRNA LIGASE, CYTOPLASMIC"/>
    <property type="match status" value="1"/>
</dbReference>
<dbReference type="Pfam" id="PF19303">
    <property type="entry name" value="Anticodon_3"/>
    <property type="match status" value="1"/>
</dbReference>
<dbReference type="Pfam" id="PF09334">
    <property type="entry name" value="tRNA-synt_1g"/>
    <property type="match status" value="1"/>
</dbReference>
<dbReference type="Pfam" id="PF01588">
    <property type="entry name" value="tRNA_bind"/>
    <property type="match status" value="1"/>
</dbReference>
<dbReference type="PRINTS" id="PR01041">
    <property type="entry name" value="TRNASYNTHMET"/>
</dbReference>
<dbReference type="SUPFAM" id="SSF47323">
    <property type="entry name" value="Anticodon-binding domain of a subclass of class I aminoacyl-tRNA synthetases"/>
    <property type="match status" value="1"/>
</dbReference>
<dbReference type="SUPFAM" id="SSF57770">
    <property type="entry name" value="Methionyl-tRNA synthetase (MetRS), Zn-domain"/>
    <property type="match status" value="1"/>
</dbReference>
<dbReference type="SUPFAM" id="SSF50249">
    <property type="entry name" value="Nucleic acid-binding proteins"/>
    <property type="match status" value="1"/>
</dbReference>
<dbReference type="SUPFAM" id="SSF52374">
    <property type="entry name" value="Nucleotidylyl transferase"/>
    <property type="match status" value="1"/>
</dbReference>
<dbReference type="PROSITE" id="PS00178">
    <property type="entry name" value="AA_TRNA_LIGASE_I"/>
    <property type="match status" value="1"/>
</dbReference>
<dbReference type="PROSITE" id="PS50886">
    <property type="entry name" value="TRBD"/>
    <property type="match status" value="1"/>
</dbReference>
<comment type="function">
    <text evidence="1">Is required not only for elongation of protein synthesis but also for the initiation of all mRNA translation through initiator tRNA(fMet) aminoacylation.</text>
</comment>
<comment type="catalytic activity">
    <reaction evidence="1">
        <text>tRNA(Met) + L-methionine + ATP = L-methionyl-tRNA(Met) + AMP + diphosphate</text>
        <dbReference type="Rhea" id="RHEA:13481"/>
        <dbReference type="Rhea" id="RHEA-COMP:9667"/>
        <dbReference type="Rhea" id="RHEA-COMP:9698"/>
        <dbReference type="ChEBI" id="CHEBI:30616"/>
        <dbReference type="ChEBI" id="CHEBI:33019"/>
        <dbReference type="ChEBI" id="CHEBI:57844"/>
        <dbReference type="ChEBI" id="CHEBI:78442"/>
        <dbReference type="ChEBI" id="CHEBI:78530"/>
        <dbReference type="ChEBI" id="CHEBI:456215"/>
        <dbReference type="EC" id="6.1.1.10"/>
    </reaction>
</comment>
<comment type="cofactor">
    <cofactor evidence="1">
        <name>Zn(2+)</name>
        <dbReference type="ChEBI" id="CHEBI:29105"/>
    </cofactor>
    <text evidence="1">Binds 1 zinc ion per subunit.</text>
</comment>
<comment type="subunit">
    <text evidence="1">Homodimer.</text>
</comment>
<comment type="subcellular location">
    <subcellularLocation>
        <location evidence="1">Cytoplasm</location>
    </subcellularLocation>
</comment>
<comment type="similarity">
    <text evidence="1">Belongs to the class-I aminoacyl-tRNA synthetase family. MetG type 1 subfamily.</text>
</comment>
<comment type="sequence caution" evidence="2">
    <conflict type="erroneous initiation">
        <sequence resource="EMBL-CDS" id="ABE07856"/>
    </conflict>
</comment>
<keyword id="KW-0030">Aminoacyl-tRNA synthetase</keyword>
<keyword id="KW-0067">ATP-binding</keyword>
<keyword id="KW-0963">Cytoplasm</keyword>
<keyword id="KW-0436">Ligase</keyword>
<keyword id="KW-0479">Metal-binding</keyword>
<keyword id="KW-0547">Nucleotide-binding</keyword>
<keyword id="KW-0648">Protein biosynthesis</keyword>
<keyword id="KW-0694">RNA-binding</keyword>
<keyword id="KW-0820">tRNA-binding</keyword>
<keyword id="KW-0862">Zinc</keyword>
<protein>
    <recommendedName>
        <fullName evidence="1">Methionine--tRNA ligase</fullName>
        <ecNumber evidence="1">6.1.1.10</ecNumber>
    </recommendedName>
    <alternativeName>
        <fullName evidence="1">Methionyl-tRNA synthetase</fullName>
        <shortName evidence="1">MetRS</shortName>
    </alternativeName>
</protein>
<organism>
    <name type="scientific">Escherichia coli (strain UTI89 / UPEC)</name>
    <dbReference type="NCBI Taxonomy" id="364106"/>
    <lineage>
        <taxon>Bacteria</taxon>
        <taxon>Pseudomonadati</taxon>
        <taxon>Pseudomonadota</taxon>
        <taxon>Gammaproteobacteria</taxon>
        <taxon>Enterobacterales</taxon>
        <taxon>Enterobacteriaceae</taxon>
        <taxon>Escherichia</taxon>
    </lineage>
</organism>